<feature type="signal peptide" evidence="12">
    <location>
        <begin position="1"/>
        <end position="47"/>
    </location>
</feature>
<feature type="chain" id="PRO_0000448367" description="Autotransporter adhesin BadA">
    <location>
        <begin position="48"/>
        <end position="3082"/>
    </location>
</feature>
<feature type="transmembrane region" description="Beta stranded" evidence="12">
    <location>
        <begin position="3028"/>
        <end position="3039"/>
    </location>
</feature>
<feature type="transmembrane region" description="Beta stranded" evidence="12">
    <location>
        <begin position="3044"/>
        <end position="3051"/>
    </location>
</feature>
<feature type="transmembrane region" description="Beta stranded" evidence="12">
    <location>
        <begin position="3055"/>
        <end position="3065"/>
    </location>
</feature>
<feature type="transmembrane region" description="Beta stranded" evidence="12">
    <location>
        <begin position="3070"/>
        <end position="3082"/>
    </location>
</feature>
<feature type="region of interest" description="Surface exposed passenger domain" evidence="1">
    <location>
        <begin position="48"/>
        <end position="2901"/>
    </location>
</feature>
<feature type="region of interest" description="Binds to host cells" evidence="4">
    <location>
        <begin position="48"/>
        <end position="376"/>
    </location>
</feature>
<feature type="region of interest" description="Does not bind host cells, no host proangiogenic cytokine induction, collagen or fibronectin, no autoagglutination" evidence="7">
    <location>
        <begin position="53"/>
        <end position="2850"/>
    </location>
</feature>
<feature type="region of interest" description="Required to bind fibronectin, not required for surface expression on bacteria, bacterial autoagglutination, host cell binding, collagen binding or host proangiogenic cytokine induction" evidence="4">
    <location>
        <begin position="470"/>
        <end position="2850"/>
    </location>
</feature>
<feature type="region of interest" description="Outer membrane translocation of the passenger domain" evidence="1">
    <location>
        <begin position="2902"/>
        <end position="3027"/>
    </location>
</feature>
<feature type="region of interest" description="Translocator domain" evidence="1 12">
    <location>
        <begin position="3028"/>
        <end position="3082"/>
    </location>
</feature>
<feature type="strand" evidence="16">
    <location>
        <begin position="387"/>
        <end position="391"/>
    </location>
</feature>
<feature type="strand" evidence="16">
    <location>
        <begin position="397"/>
        <end position="399"/>
    </location>
</feature>
<feature type="strand" evidence="16">
    <location>
        <begin position="404"/>
        <end position="411"/>
    </location>
</feature>
<feature type="strand" evidence="16">
    <location>
        <begin position="414"/>
        <end position="417"/>
    </location>
</feature>
<feature type="strand" evidence="16">
    <location>
        <begin position="425"/>
        <end position="429"/>
    </location>
</feature>
<feature type="strand" evidence="16">
    <location>
        <begin position="431"/>
        <end position="434"/>
    </location>
</feature>
<feature type="strand" evidence="16">
    <location>
        <begin position="436"/>
        <end position="440"/>
    </location>
</feature>
<feature type="strand" evidence="16">
    <location>
        <begin position="443"/>
        <end position="452"/>
    </location>
</feature>
<feature type="strand" evidence="16">
    <location>
        <begin position="457"/>
        <end position="459"/>
    </location>
</feature>
<feature type="strand" evidence="16">
    <location>
        <begin position="462"/>
        <end position="468"/>
    </location>
</feature>
<feature type="strand" evidence="16">
    <location>
        <begin position="470"/>
        <end position="473"/>
    </location>
</feature>
<feature type="helix" evidence="16">
    <location>
        <begin position="485"/>
        <end position="495"/>
    </location>
</feature>
<gene>
    <name evidence="9" type="primary">badA</name>
</gene>
<keyword id="KW-0002">3D-structure</keyword>
<keyword id="KW-0130">Cell adhesion</keyword>
<keyword id="KW-0998">Cell outer membrane</keyword>
<keyword id="KW-0472">Membrane</keyword>
<keyword id="KW-0653">Protein transport</keyword>
<keyword id="KW-0732">Signal</keyword>
<keyword id="KW-0812">Transmembrane</keyword>
<keyword id="KW-1134">Transmembrane beta strand</keyword>
<keyword id="KW-0813">Transport</keyword>
<keyword id="KW-0843">Virulence</keyword>
<sequence length="3082" mass="327543">MKKLSVTSKRQYNLYASPISRRLSLLMKLSLETVTVMFLLGASPVLASNLALTGAKNLSQNSPGVNYSKGSHGSIVLSGDDDFCGADYVLGRGGNSTVRNGIPISVEEEYERFVKQKLMNNATSPYSQSSEQQVWTGDGLTSKGSGYMGGKSTDGDKNILPEAYGIYSFATGCGSSAQGNYSVAFGANATALTGGSQAFGVAALASGRVSVAIGVGSEATGEAGVSLGGLSKAAGARSVAIGTRAKAQGEESIAIGSSVKNGDKDGSAVAQGAKAIAIGSNSISFQHYAVAVGAKAHALLSKTVALGYDSVADVDAGIRGYDPVEDEPSKDVSFVWKSSLGAVSVGNRKEGLTRQIIGVAAGTEDTDAVNVAQLKALRGMISEKGGWNLTVNNDNNTVVSSGGALDLSSGSKNLKIVKDGKKNNVTFDVARDLTLKSIKLDGVTLNETGLFIANGPQITASGINAGSQKITGVAEGTDANDAVNFGQLKKIETEVKEQVAASGFVKQDSDTKYLTIGKDTDGDTINIANNKSDKRTLTGIKEGDISKDSSEAITGSQLFTTNQNVKTVSDNLQTAATNIAKTFGGGAKYEDGEWIAPAFKVKTVTGEGKEEEKRYQNVADALAGVGSSITNVQNKVTEQVNNAITKVEGDALLWSDEANAFVARHEKSKLGKGASKATQENSKITYLLDGDVSKDSTDAITGKQLYSLGDKIASYLGGNAKYEDGEWTAPTFKVKTVKEDGKEEEKTYQNVAEALTGVGTSFTNVKNEITKQINHLQSDDSAVVHYDKNKDETGGINYASVTLGKGKDSAAVTLHNVADGSISKDSRDAINGSQIYSLNEQLATYFGGGAKYENGQWTAPIFKVKTVKEDGEEEEKTYQNVAEALTGVGTSFTNIKSEITKQIANEISSVTGDSLVKKDLATNLITIGKEVAGTEINIASVSKADRTLSGVKEAVKDNEAVNKGQLDKGLKHLSDSLQSDDSAVVHYDKKTDETGGINYTSVTLGGKDKTPVALHNVADGSISKDSHDAINGGQIHTIGEDVAKFLGGAASFNNGAFTGPTYKLSNIDAKGDVQQSEFKDIGSAFAGLDTNIKNVNNNVTNKFNELTQNITNVTQQVKGDALLWSDEANAFVARHEKSKLGKGASKATQENSKITYLLDGDVSKDSTDAITGKQLYSLGDKIASYLGGNAKYENGEWTAPTFKVKTVKEDGKEEEKTYQNVAEALTGVGASFTNVKNEITKQINHLQSDDSAVVHYDKNKDETGGINYASVTLGKGKDSAAVTLHNVADGSISKDSRDAINGSQIYSLNEQLATYFGGGAKYENGQWTAPIFKVKTVKEDGEEEEKTYQNVAEALTGVGTSFTNIKSEITKQIANEISSVTGDSLVKKDLATNLITIGKEVAGTEINIASVSKADRTLSGVKEAVKDNEAVNKGQLDTNIKKVEDKLTEAVGKVTQQVKGDALLWSNEDNAFVADHGKDSAKTKSKITHLLDGNIASGSTDAVTGGQLYSLNEQLATYFGGGAKYENGQWTAPTFKVKTVNGEGKEEEQTYQNVAEALTGVGASFMNVQNKITNEITNQVNNAITKVEGDSLVKQDNLGIITLGKERGGLKVDFANRDGLDRTLSGVKEAVNDNEAVNKGQLDADISKVNNNVTNKFNELTQNITNVTQQVKGDALLWSDEANAFVARHEKSKLEKGVSKATQENSKITYLLDGDISKGSTDAVTGGQLYSLNEQLATYFGGGAKYENGQWTAPTFKVKTVNGEGKEEEQTYQNVAAAFEGVGTSFTNIKSEITKQINNEIINVKGDSLVKRDLATNLITIGKEIEGSVINIANKSGEARTISGVKEAVKDNEAVNKGQLDTNIKKVEDKLTEAVGKVTQQVKGDALLWSNEDNAFVADHGKDSAKTKSKITHLLDGNIASGSTDAVTGGQLYSLNEQLATYFGGGAKYENGQWTAPTFKVKTVNGEGKEEEKTYQNVAAAFEGVGTSFTNIKSEITKQIANEISNVTGDSLVKKDLDTNLITIGKEIAGTEINIASVSKADRTLSGVKEAVNDNEAVNKGQLDANISKVNNNVTNKFNELTQSITNVTQQVKGDALLWSDEANAFVARHEKSKLEKGVSKATQENSKITYLLDGDISKGSTDAVTGGQLYSLNEQLATYFGGGAKYENGQWTAPTFKVKTVNGEGKEEEQTYQNVAAAFEGVGTSFTNIKSEITKQINNEIINVKGDSLVKRDLATNLITIGKEIEGSVINIANKSGEARTISGVKEAVKDNEAVNKGQLDTNIKKVEDKLTEAVGKVTQQVKGDALLWSNEDNAFVADHGKDSAKTKSKITHLLDGNIASGSTDAVTGGQLYSLNEQLATYFGGGAKYENGQWTAPTFKVKTVNGEGKEEEKTYQNVAAAFEGVGTSFTHVKNEITKQINHLQSDDSAVVHYDKDDKNGSINYASVTLGKGKDSAAVALHNVADGSISKDSHDAINGGQIHTIGEDVAKFLGGDAAFKDGAFTGPTYKLSNIDAKGDVQQSEFKDIGSAFAGLDTNIKNVNNNVTNKLSELTQNITTVTQQVKGNALLWSDEANAFVARHEKSKLEKGASKAIQENSKITYLLDGDVSKGSTDAVTGGQLYSMSNMLATYLGGNAKYENGEWTAPTFKVKTVNGEGKEEEQTYQNVAEALTGVGTSFTNIKSEIAKQINHLQSDDSAVIHYDKNKDETGTINYASVTLGKGEDSAAVALHNVAAGNIAKDSRDAINGSQLYSLNEQLLTYFGGDAGYKDGQWIAPKFHVLQFKSDGSSGEKESYDNVAAAFEGVNKSLAGMNERINNVTAGQNVSSSSLNWNETEGGYDARHNGVDSKLTHVENGDVSEKSKEAVNGSQLWNTNEKVEAVEKDVKNIEKKVQDIATVADSAVKYEKDSTGKKTNVIKLVGGSESEPVLIDNVADGKIEADSKQAVNGGQLRDYTEKQMKIVLDDAKKYTDERFNDVVNNGINEAKAYTDVKFEALSYTVEEVRKEARQAAAIGLAVSNLRYYDIPGSLSLSFGTGIWRSQSAFAIGAGYTSEDGNIRSNLSITSSGGQWGVGAGITLRLK</sequence>
<name>BADA_BARHN</name>
<comment type="function">
    <text evidence="2 3 4 6 8 14">Mediates bacterial adherence to host endothelial cells and host extracellular matrix proteins (collagen type I, III, IV, laminin and fibronectin). Static versus dynamic adherence results differ slightly; in dynamic adherence studies bacteria bind to fixed components under a constant defined flow rate to simulate in vivo infection conditions (PubMed:15534369, PubMed:17060468, PubMed:18627378, PubMed:21536788, PubMed:23163798). Induces secretion of host proangiogenic cytokines such as VEGFA, ADM, IGFBP-3 and IL-8. May prevent bacterial phagocytosis by macrophages (Probable) (PubMed:15534369). Probably mediates bacterial autoagglutination (PubMed:17060468, PubMed:18627378). Negatively impacts type IV secretion system effectors (VirB/D4 T4SS and its substrate Bep proteins), possibly by preventing close association of host and bacterial cells. This implies the 2 factors are expressed at different times during infection (Probable).</text>
</comment>
<comment type="subunit">
    <text evidence="5 13">Homotrimer (Probable). Crystals of the head region form trimers (PubMed:18688279).</text>
</comment>
<comment type="subcellular location">
    <subcellularLocation>
        <location evidence="2 4 6 7 8">Cell surface</location>
    </subcellularLocation>
    <subcellularLocation>
        <location evidence="2 4">Cell outer membrane</location>
    </subcellularLocation>
    <text evidence="1 2 4 6 7 8">Forms long (about 240 nm) filaments extending from the cell surface, which were initially called type IV pili (PubMed:15534369, PubMed:18627378, PubMed:21536788, PubMed:21981119, PubMed:23163798). The C-terminal translocator domain is localized in the outer membrane and the passenger domain is at the cell surface (By similarity).</text>
</comment>
<comment type="domain">
    <text evidence="4 7">The N-terminus (residues 48-376) performs most of the host-associated functions of the protein and binds collagen. The large central domain (composed of neck-stalk repeats about residue 470-2850) is required to bind host fibronectin and contributes to host cell adherence, collagen-binding and induction of host proangiogenic factors.</text>
</comment>
<comment type="domain">
    <text evidence="1">The signal peptide, cleaved at the inner membrane, guides the autotransporter protein to the periplasmic space. Then, insertion of the C-terminal translocator domain in the outer membrane forms a hydrophilic pore for the translocation of the passenger domain to the bacterial cell surface.</text>
</comment>
<comment type="disruption phenotype">
    <text evidence="2 6">No longer binds to host cells or host extracellular matrix proteins, loss of bacterial 'type IV-like pili'. Bacteria are more frequently phagocytosed by murine J774 macrophages. Infected HeLa cells no longer secrete proangiogenic factors such as VEGFA, ADM, IGFBP3 or IL-8 (PubMed:15534369). Decreased binding to host epithelial cells and to host extracellular matrix components vitronectin, hyaluronate, fibronectin, laminin, collagens I, III and IV under static and dynamic flow conditions (PubMed:21536788).</text>
</comment>
<comment type="biotechnology">
    <text evidence="12">Antisera to this protein are frequently present in humans and animals infected by B.henselae, suggesting it might be useful as a marker for B.henselae infection.</text>
</comment>
<comment type="miscellaneous">
    <text evidence="11">Infection with B.henselae leads to cat scratch disease in immunocompetent individuals and bacillary angiomatosis, tumorous proliferations of endothelial cells in the skin and internal organs in immunocompromised patients.</text>
</comment>
<comment type="similarity">
    <text evidence="11">Belongs to the autotransporter-2 (AT-2) (TC 1.B.40) family.</text>
</comment>
<organism>
    <name type="scientific">Bartonella henselae</name>
    <name type="common">Rochalimaea henselae</name>
    <dbReference type="NCBI Taxonomy" id="38323"/>
    <lineage>
        <taxon>Bacteria</taxon>
        <taxon>Pseudomonadati</taxon>
        <taxon>Pseudomonadota</taxon>
        <taxon>Alphaproteobacteria</taxon>
        <taxon>Hyphomicrobiales</taxon>
        <taxon>Bartonellaceae</taxon>
        <taxon>Bartonella</taxon>
    </lineage>
</organism>
<accession>Q5MWV9</accession>
<protein>
    <recommendedName>
        <fullName evidence="10">Autotransporter adhesin BadA</fullName>
    </recommendedName>
    <alternativeName>
        <fullName evidence="9">Bartonella adhesin A</fullName>
        <shortName evidence="9">BadA</shortName>
    </alternativeName>
    <alternativeName>
        <fullName evidence="9">Non-fimbrial adhesin A</fullName>
    </alternativeName>
    <alternativeName>
        <fullName evidence="11">Type 5 secretion system autotransporter BadA</fullName>
    </alternativeName>
    <alternativeName>
        <fullName evidence="9">Type IV pilus</fullName>
    </alternativeName>
</protein>
<proteinExistence type="evidence at protein level"/>
<reference key="1">
    <citation type="journal article" date="2007" name="Infect. Immun.">
        <title>Analysis of Bartonella adhesin A expression reveals differences between various B. henselae strains.</title>
        <authorList>
            <person name="Riess T."/>
            <person name="Raddatz G."/>
            <person name="Linke D."/>
            <person name="Schafer A."/>
            <person name="Kempf V.A."/>
        </authorList>
    </citation>
    <scope>NUCLEOTIDE SEQUENCE [GENOMIC DNA]</scope>
    <scope>FUNCTION</scope>
    <source>
        <strain>Marseille</strain>
    </source>
</reference>
<reference key="2">
    <citation type="journal article" date="2004" name="J. Exp. Med.">
        <title>Bartonella adhesin A mediates a proangiogenic host cell response.</title>
        <authorList>
            <person name="Riess T."/>
            <person name="Andersson S.G."/>
            <person name="Lupas A."/>
            <person name="Schaller M."/>
            <person name="Schafer A."/>
            <person name="Kyme P."/>
            <person name="Martin J."/>
            <person name="Walzlein J.H."/>
            <person name="Ehehalt U."/>
            <person name="Lindroos H."/>
            <person name="Schirle M."/>
            <person name="Nordheim A."/>
            <person name="Autenrieth I.B."/>
            <person name="Kempf V.A."/>
        </authorList>
    </citation>
    <scope>NUCLEOTIDE SEQUENCE [GENOMIC DNA] OF 1-536 AND 2573-2761</scope>
    <scope>FUNCTION</scope>
    <scope>IDENTIFICATION BY MASS SPECTROMETRY</scope>
    <scope>SUBCELLULAR LOCATION</scope>
    <scope>DISRUPTION PHENOTYPE</scope>
    <scope>BIOTECHNOLOGY</scope>
    <source>
        <strain>Marseille</strain>
    </source>
</reference>
<reference key="3">
    <citation type="journal article" date="2008" name="Cell. Microbiol.">
        <title>The head of Bartonella adhesin A is crucial for host cell interaction of Bartonella henselae.</title>
        <authorList>
            <person name="Kaiser P.O."/>
            <person name="Riess T."/>
            <person name="Wagner C.L."/>
            <person name="Linke D."/>
            <person name="Lupas A.N."/>
            <person name="Schwarz H."/>
            <person name="Raddatz G."/>
            <person name="Schaefer A."/>
            <person name="Kempf V.A."/>
        </authorList>
    </citation>
    <scope>FUNCTION</scope>
    <scope>SUBCELLULAR LOCATION</scope>
    <scope>DOMAIN</scope>
    <source>
        <strain>Marseille</strain>
    </source>
</reference>
<reference key="4">
    <citation type="journal article" date="2011" name="Infect. Immun.">
        <title>Trimeric autotransporter adhesin-dependent adherence of Bartonella henselae, Bartonella quintana, and Yersinia enterocolitica to matrix components and endothelial cells under static and dynamic flow conditions.</title>
        <authorList>
            <person name="Mueller N.F."/>
            <person name="Kaiser P.O."/>
            <person name="Linke D."/>
            <person name="Schwarz H."/>
            <person name="Riess T."/>
            <person name="Schaefer A."/>
            <person name="Eble J.A."/>
            <person name="Kempf V.A."/>
        </authorList>
    </citation>
    <scope>FUNCTION</scope>
    <scope>SUBCELLULAR LOCATION</scope>
    <scope>DISRUPTION PHENOTYPE</scope>
    <source>
        <strain>Marseille</strain>
    </source>
</reference>
<reference key="5">
    <citation type="journal article" date="2012" name="Cell. Microbiol.">
        <title>Analysis of the BadA stalk from Bartonella henselae reveals domain-specific and domain-overlapping functions in the host cell infection process.</title>
        <authorList>
            <person name="Kaiser P.O."/>
            <person name="Linke D."/>
            <person name="Schwarz H."/>
            <person name="Leo J.C."/>
            <person name="Kempf V.A."/>
        </authorList>
    </citation>
    <scope>SUBCELLULAR LOCATION</scope>
    <scope>DOMAIN</scope>
    <source>
        <strain>Marseille</strain>
    </source>
</reference>
<reference key="6">
    <citation type="journal article" date="2013" name="Cell. Microbiol.">
        <title>Bartonella henselae trimeric autotransporter adhesin BadA expression interferes with effector translocation by the VirB/D4 type IV secretion system.</title>
        <authorList>
            <person name="Lu Y.Y."/>
            <person name="Franz B."/>
            <person name="Truttmann M.C."/>
            <person name="Riess T."/>
            <person name="Gay-Fraret J."/>
            <person name="Faustmann M."/>
            <person name="Kempf V.A."/>
            <person name="Dehio C."/>
        </authorList>
    </citation>
    <scope>FUNCTION</scope>
    <scope>SUBCELLULAR LOCATION</scope>
    <source>
        <strain>ATCC 49882 / DSM 28221 / Houston 1</strain>
        <strain>Marseille</strain>
        <strain>various clinical strains</strain>
    </source>
</reference>
<reference evidence="15" key="7">
    <citation type="journal article" date="2008" name="PLoS Pathog.">
        <title>Structure of the head of the Bartonella adhesin BadA.</title>
        <authorList>
            <person name="Szczesny P."/>
            <person name="Linke D."/>
            <person name="Ursinus A."/>
            <person name="Bar K."/>
            <person name="Schwarz H."/>
            <person name="Riess T.M."/>
            <person name="Kempf V.A."/>
            <person name="Lupas A.N."/>
            <person name="Martin J."/>
            <person name="Zeth K."/>
        </authorList>
    </citation>
    <scope>X-RAY CRYSTALLOGRAPHY (1.13 ANGSTROMS) OF 375-536</scope>
    <scope>SUBUNIT</scope>
    <source>
        <strain>Marseille</strain>
    </source>
</reference>
<dbReference type="EMBL" id="DQ665674">
    <property type="protein sequence ID" value="AAT69970.2"/>
    <property type="molecule type" value="Genomic_DNA"/>
</dbReference>
<dbReference type="PDB" id="3D9X">
    <property type="method" value="X-ray"/>
    <property type="resolution" value="1.13 A"/>
    <property type="chains" value="A/B/C=374-536"/>
</dbReference>
<dbReference type="PDBsum" id="3D9X"/>
<dbReference type="SMR" id="Q5MWV9"/>
<dbReference type="STRING" id="38323.BM1374165_00160"/>
<dbReference type="EvolutionaryTrace" id="Q5MWV9"/>
<dbReference type="GO" id="GO:0009279">
    <property type="term" value="C:cell outer membrane"/>
    <property type="evidence" value="ECO:0007669"/>
    <property type="project" value="UniProtKB-SubCell"/>
</dbReference>
<dbReference type="GO" id="GO:0009986">
    <property type="term" value="C:cell surface"/>
    <property type="evidence" value="ECO:0007669"/>
    <property type="project" value="UniProtKB-SubCell"/>
</dbReference>
<dbReference type="GO" id="GO:0141018">
    <property type="term" value="P:adhesion of symbiont to host via host extracellular matrix"/>
    <property type="evidence" value="ECO:0000269"/>
    <property type="project" value="SigSci"/>
</dbReference>
<dbReference type="GO" id="GO:0007155">
    <property type="term" value="P:cell adhesion"/>
    <property type="evidence" value="ECO:0007669"/>
    <property type="project" value="UniProtKB-KW"/>
</dbReference>
<dbReference type="GO" id="GO:0015031">
    <property type="term" value="P:protein transport"/>
    <property type="evidence" value="ECO:0007669"/>
    <property type="project" value="UniProtKB-KW"/>
</dbReference>
<dbReference type="CDD" id="cd12820">
    <property type="entry name" value="LbR_YadA-like"/>
    <property type="match status" value="1"/>
</dbReference>
<dbReference type="Gene3D" id="1.20.5.170">
    <property type="match status" value="13"/>
</dbReference>
<dbReference type="Gene3D" id="2.20.70.140">
    <property type="match status" value="1"/>
</dbReference>
<dbReference type="Gene3D" id="6.10.250.2030">
    <property type="match status" value="11"/>
</dbReference>
<dbReference type="Gene3D" id="6.10.250.2040">
    <property type="match status" value="1"/>
</dbReference>
<dbReference type="Gene3D" id="6.10.250.2120">
    <property type="match status" value="1"/>
</dbReference>
<dbReference type="Gene3D" id="6.20.50.100">
    <property type="match status" value="1"/>
</dbReference>
<dbReference type="Gene3D" id="3.30.1300.30">
    <property type="entry name" value="GSPII I/J protein-like"/>
    <property type="match status" value="1"/>
</dbReference>
<dbReference type="Gene3D" id="2.150.10.10">
    <property type="entry name" value="Serralysin-like metalloprotease, C-terminal"/>
    <property type="match status" value="2"/>
</dbReference>
<dbReference type="InterPro" id="IPR008640">
    <property type="entry name" value="Adhesin_Head_dom"/>
</dbReference>
<dbReference type="InterPro" id="IPR008635">
    <property type="entry name" value="Coiled_stalk_dom"/>
</dbReference>
<dbReference type="InterPro" id="IPR045584">
    <property type="entry name" value="Pilin-like"/>
</dbReference>
<dbReference type="InterPro" id="IPR011049">
    <property type="entry name" value="Serralysin-like_metalloprot_C"/>
</dbReference>
<dbReference type="InterPro" id="IPR005594">
    <property type="entry name" value="YadA_C"/>
</dbReference>
<dbReference type="NCBIfam" id="NF033870">
    <property type="entry name" value="VOMP_auto_Cterm"/>
    <property type="match status" value="1"/>
</dbReference>
<dbReference type="Pfam" id="PF03895">
    <property type="entry name" value="YadA_anchor"/>
    <property type="match status" value="1"/>
</dbReference>
<dbReference type="Pfam" id="PF05658">
    <property type="entry name" value="YadA_head"/>
    <property type="match status" value="3"/>
</dbReference>
<dbReference type="Pfam" id="PF05662">
    <property type="entry name" value="YadA_stalk"/>
    <property type="match status" value="20"/>
</dbReference>
<dbReference type="SUPFAM" id="SSF101967">
    <property type="entry name" value="Adhesin YadA, collagen-binding domain"/>
    <property type="match status" value="2"/>
</dbReference>
<dbReference type="SUPFAM" id="SSF54523">
    <property type="entry name" value="Pili subunits"/>
    <property type="match status" value="1"/>
</dbReference>
<evidence type="ECO:0000250" key="1">
    <source>
        <dbReference type="UniProtKB" id="P0C2W0"/>
    </source>
</evidence>
<evidence type="ECO:0000269" key="2">
    <source>
    </source>
</evidence>
<evidence type="ECO:0000269" key="3">
    <source>
    </source>
</evidence>
<evidence type="ECO:0000269" key="4">
    <source>
    </source>
</evidence>
<evidence type="ECO:0000269" key="5">
    <source>
    </source>
</evidence>
<evidence type="ECO:0000269" key="6">
    <source>
    </source>
</evidence>
<evidence type="ECO:0000269" key="7">
    <source>
    </source>
</evidence>
<evidence type="ECO:0000269" key="8">
    <source>
    </source>
</evidence>
<evidence type="ECO:0000303" key="9">
    <source>
    </source>
</evidence>
<evidence type="ECO:0000303" key="10">
    <source>
    </source>
</evidence>
<evidence type="ECO:0000305" key="11"/>
<evidence type="ECO:0000305" key="12">
    <source>
    </source>
</evidence>
<evidence type="ECO:0000305" key="13">
    <source>
    </source>
</evidence>
<evidence type="ECO:0000305" key="14">
    <source>
    </source>
</evidence>
<evidence type="ECO:0007744" key="15">
    <source>
        <dbReference type="PDB" id="3D9X"/>
    </source>
</evidence>
<evidence type="ECO:0007829" key="16">
    <source>
        <dbReference type="PDB" id="3D9X"/>
    </source>
</evidence>